<feature type="chain" id="PRO_1000205331" description="Large ribosomal subunit protein eL34">
    <location>
        <begin position="1"/>
        <end position="85"/>
    </location>
</feature>
<sequence length="85" mass="9814">MPRPALRSRSLRRIYVKLPSGKTAIHYERKKNDIPKCAMCKKPLHGVKTNFLHKYGKSEKRPERPFGGYLCSSCLAQLIKAMVRQ</sequence>
<organism>
    <name type="scientific">Saccharolobus islandicus (strain M.16.27)</name>
    <name type="common">Sulfolobus islandicus</name>
    <dbReference type="NCBI Taxonomy" id="427318"/>
    <lineage>
        <taxon>Archaea</taxon>
        <taxon>Thermoproteota</taxon>
        <taxon>Thermoprotei</taxon>
        <taxon>Sulfolobales</taxon>
        <taxon>Sulfolobaceae</taxon>
        <taxon>Saccharolobus</taxon>
    </lineage>
</organism>
<accession>C3N5V3</accession>
<keyword id="KW-0687">Ribonucleoprotein</keyword>
<keyword id="KW-0689">Ribosomal protein</keyword>
<name>RL34_SACI3</name>
<evidence type="ECO:0000255" key="1">
    <source>
        <dbReference type="HAMAP-Rule" id="MF_00349"/>
    </source>
</evidence>
<evidence type="ECO:0000305" key="2"/>
<reference key="1">
    <citation type="journal article" date="2009" name="Proc. Natl. Acad. Sci. U.S.A.">
        <title>Biogeography of the Sulfolobus islandicus pan-genome.</title>
        <authorList>
            <person name="Reno M.L."/>
            <person name="Held N.L."/>
            <person name="Fields C.J."/>
            <person name="Burke P.V."/>
            <person name="Whitaker R.J."/>
        </authorList>
    </citation>
    <scope>NUCLEOTIDE SEQUENCE [LARGE SCALE GENOMIC DNA]</scope>
    <source>
        <strain>M.16.27</strain>
    </source>
</reference>
<gene>
    <name evidence="1" type="primary">rpl34e</name>
    <name type="ordered locus">M1627_1496</name>
</gene>
<protein>
    <recommendedName>
        <fullName evidence="1">Large ribosomal subunit protein eL34</fullName>
    </recommendedName>
    <alternativeName>
        <fullName evidence="2">50S ribosomal protein L34e</fullName>
    </alternativeName>
</protein>
<proteinExistence type="inferred from homology"/>
<dbReference type="EMBL" id="CP001401">
    <property type="protein sequence ID" value="ACP55378.1"/>
    <property type="molecule type" value="Genomic_DNA"/>
</dbReference>
<dbReference type="RefSeq" id="WP_012711444.1">
    <property type="nucleotide sequence ID" value="NC_012632.1"/>
</dbReference>
<dbReference type="SMR" id="C3N5V3"/>
<dbReference type="KEGG" id="sim:M1627_1496"/>
<dbReference type="HOGENOM" id="CLU_118652_2_0_2"/>
<dbReference type="Proteomes" id="UP000002307">
    <property type="component" value="Chromosome"/>
</dbReference>
<dbReference type="GO" id="GO:1990904">
    <property type="term" value="C:ribonucleoprotein complex"/>
    <property type="evidence" value="ECO:0007669"/>
    <property type="project" value="UniProtKB-KW"/>
</dbReference>
<dbReference type="GO" id="GO:0005840">
    <property type="term" value="C:ribosome"/>
    <property type="evidence" value="ECO:0007669"/>
    <property type="project" value="UniProtKB-KW"/>
</dbReference>
<dbReference type="GO" id="GO:0003735">
    <property type="term" value="F:structural constituent of ribosome"/>
    <property type="evidence" value="ECO:0007669"/>
    <property type="project" value="InterPro"/>
</dbReference>
<dbReference type="GO" id="GO:0006412">
    <property type="term" value="P:translation"/>
    <property type="evidence" value="ECO:0007669"/>
    <property type="project" value="UniProtKB-UniRule"/>
</dbReference>
<dbReference type="Gene3D" id="6.20.340.10">
    <property type="match status" value="1"/>
</dbReference>
<dbReference type="HAMAP" id="MF_00349">
    <property type="entry name" value="Ribosomal_eL34"/>
    <property type="match status" value="1"/>
</dbReference>
<dbReference type="InterPro" id="IPR008195">
    <property type="entry name" value="Ribosomal_eL34"/>
</dbReference>
<dbReference type="InterPro" id="IPR038562">
    <property type="entry name" value="Ribosomal_eL34_C_sf"/>
</dbReference>
<dbReference type="InterPro" id="IPR018065">
    <property type="entry name" value="Ribosomal_eL34_CS"/>
</dbReference>
<dbReference type="InterPro" id="IPR047868">
    <property type="entry name" value="Ribosomal_L34e_arc-type"/>
</dbReference>
<dbReference type="NCBIfam" id="NF003143">
    <property type="entry name" value="PRK04059.1"/>
    <property type="match status" value="1"/>
</dbReference>
<dbReference type="Pfam" id="PF01199">
    <property type="entry name" value="Ribosomal_L34e"/>
    <property type="match status" value="1"/>
</dbReference>
<dbReference type="PRINTS" id="PR01250">
    <property type="entry name" value="RIBOSOMALL34"/>
</dbReference>
<dbReference type="PROSITE" id="PS01145">
    <property type="entry name" value="RIBOSOMAL_L34E"/>
    <property type="match status" value="1"/>
</dbReference>
<comment type="similarity">
    <text evidence="1">Belongs to the eukaryotic ribosomal protein eL34 family.</text>
</comment>